<reference key="1">
    <citation type="journal article" date="2003" name="Mol. Biol. Evol.">
        <title>Signal sequence conservation and mature peptide divergence within subgroups of the murine beta-defensin gene family.</title>
        <authorList>
            <person name="Morrison G.M."/>
            <person name="Semple C.A.M."/>
            <person name="Kilanowski F.M."/>
            <person name="Hill R.E."/>
            <person name="Dorin J.R."/>
        </authorList>
    </citation>
    <scope>NUCLEOTIDE SEQUENCE [MRNA]</scope>
    <scope>TISSUE SPECIFICITY</scope>
    <source>
        <strain>C57BL/6N</strain>
        <tissue>Testis</tissue>
    </source>
</reference>
<reference key="2">
    <citation type="journal article" date="2004" name="J. Biol. Chem.">
        <title>Identification on mouse chromosome 8 of new beta-defensin genes with regionally specific expression in the male reproductive organ.</title>
        <authorList>
            <person name="Zaballos A."/>
            <person name="Villares R."/>
            <person name="Albar J.P."/>
            <person name="Martinez-A C."/>
            <person name="Marquez G."/>
        </authorList>
    </citation>
    <scope>NUCLEOTIDE SEQUENCE [MRNA]</scope>
    <scope>TISSUE SPECIFICITY</scope>
    <source>
        <strain>BALB/cJ</strain>
        <tissue>Epididymis</tissue>
    </source>
</reference>
<reference key="3">
    <citation type="journal article" date="2009" name="PLoS Biol.">
        <title>Lineage-specific biology revealed by a finished genome assembly of the mouse.</title>
        <authorList>
            <person name="Church D.M."/>
            <person name="Goodstadt L."/>
            <person name="Hillier L.W."/>
            <person name="Zody M.C."/>
            <person name="Goldstein S."/>
            <person name="She X."/>
            <person name="Bult C.J."/>
            <person name="Agarwala R."/>
            <person name="Cherry J.L."/>
            <person name="DiCuccio M."/>
            <person name="Hlavina W."/>
            <person name="Kapustin Y."/>
            <person name="Meric P."/>
            <person name="Maglott D."/>
            <person name="Birtle Z."/>
            <person name="Marques A.C."/>
            <person name="Graves T."/>
            <person name="Zhou S."/>
            <person name="Teague B."/>
            <person name="Potamousis K."/>
            <person name="Churas C."/>
            <person name="Place M."/>
            <person name="Herschleb J."/>
            <person name="Runnheim R."/>
            <person name="Forrest D."/>
            <person name="Amos-Landgraf J."/>
            <person name="Schwartz D.C."/>
            <person name="Cheng Z."/>
            <person name="Lindblad-Toh K."/>
            <person name="Eichler E.E."/>
            <person name="Ponting C.P."/>
        </authorList>
    </citation>
    <scope>NUCLEOTIDE SEQUENCE [LARGE SCALE GENOMIC DNA]</scope>
    <source>
        <strain>C57BL/6J</strain>
    </source>
</reference>
<comment type="function">
    <text evidence="1">Has antibacterial activity.</text>
</comment>
<comment type="subcellular location">
    <subcellularLocation>
        <location evidence="1">Secreted</location>
    </subcellularLocation>
</comment>
<comment type="tissue specificity">
    <text evidence="3 4">Expressed in testis and to a lesser extent in epididymis (caput, corpus and cauda). Also weakly expressed in kidneys.</text>
</comment>
<comment type="similarity">
    <text evidence="5">Belongs to the beta-defensin family.</text>
</comment>
<sequence length="64" mass="7520">MRIFSLIVAGLVLLIQLYPAWGTLYRRFLCKKMNGQCEAECFTFEQKIGTCQANFLCCRKRKEH</sequence>
<keyword id="KW-0044">Antibiotic</keyword>
<keyword id="KW-0929">Antimicrobial</keyword>
<keyword id="KW-0211">Defensin</keyword>
<keyword id="KW-1015">Disulfide bond</keyword>
<keyword id="KW-1185">Reference proteome</keyword>
<keyword id="KW-0964">Secreted</keyword>
<keyword id="KW-0732">Signal</keyword>
<accession>Q8R2I4</accession>
<accession>A2A4E3</accession>
<name>DFB13_MOUSE</name>
<protein>
    <recommendedName>
        <fullName>Beta-defensin 13</fullName>
        <shortName>BD-13</shortName>
        <shortName>mBD-13</shortName>
    </recommendedName>
    <alternativeName>
        <fullName>Defensin, beta 13</fullName>
    </alternativeName>
</protein>
<proteinExistence type="evidence at transcript level"/>
<dbReference type="EMBL" id="AJ575427">
    <property type="protein sequence ID" value="CAE01400.1"/>
    <property type="molecule type" value="mRNA"/>
</dbReference>
<dbReference type="EMBL" id="AJ437649">
    <property type="protein sequence ID" value="CAD26898.1"/>
    <property type="molecule type" value="mRNA"/>
</dbReference>
<dbReference type="EMBL" id="AL590619">
    <property type="status" value="NOT_ANNOTATED_CDS"/>
    <property type="molecule type" value="Genomic_DNA"/>
</dbReference>
<dbReference type="CCDS" id="CCDS40290.1"/>
<dbReference type="RefSeq" id="NP_631969.1">
    <property type="nucleotide sequence ID" value="NM_139223.5"/>
</dbReference>
<dbReference type="FunCoup" id="Q8R2I4">
    <property type="interactions" value="13"/>
</dbReference>
<dbReference type="STRING" id="10090.ENSMUSP00000060997"/>
<dbReference type="PaxDb" id="10090-ENSMUSP00000060997"/>
<dbReference type="DNASU" id="246083"/>
<dbReference type="Ensembl" id="ENSMUST00000060587.4">
    <property type="protein sequence ID" value="ENSMUSP00000060997.4"/>
    <property type="gene ID" value="ENSMUSG00000044222.4"/>
</dbReference>
<dbReference type="GeneID" id="246083"/>
<dbReference type="KEGG" id="mmu:246083"/>
<dbReference type="UCSC" id="uc009lcg.1">
    <property type="organism name" value="mouse"/>
</dbReference>
<dbReference type="AGR" id="MGI:2179203"/>
<dbReference type="CTD" id="246083"/>
<dbReference type="MGI" id="MGI:2179203">
    <property type="gene designation" value="Defb13"/>
</dbReference>
<dbReference type="VEuPathDB" id="HostDB:ENSMUSG00000044222"/>
<dbReference type="eggNOG" id="ENOG502TF47">
    <property type="taxonomic scope" value="Eukaryota"/>
</dbReference>
<dbReference type="GeneTree" id="ENSGT00390000013953"/>
<dbReference type="HOGENOM" id="CLU_2757177_0_0_1"/>
<dbReference type="InParanoid" id="Q8R2I4"/>
<dbReference type="OMA" id="LYRRFLC"/>
<dbReference type="OrthoDB" id="9795234at2759"/>
<dbReference type="PhylomeDB" id="Q8R2I4"/>
<dbReference type="BioGRID-ORCS" id="246083">
    <property type="hits" value="2 hits in 73 CRISPR screens"/>
</dbReference>
<dbReference type="PRO" id="PR:Q8R2I4"/>
<dbReference type="Proteomes" id="UP000000589">
    <property type="component" value="Chromosome 8"/>
</dbReference>
<dbReference type="RNAct" id="Q8R2I4">
    <property type="molecule type" value="protein"/>
</dbReference>
<dbReference type="Bgee" id="ENSMUSG00000044222">
    <property type="expression patterns" value="Expressed in animal zygote and 3 other cell types or tissues"/>
</dbReference>
<dbReference type="GO" id="GO:0005576">
    <property type="term" value="C:extracellular region"/>
    <property type="evidence" value="ECO:0007669"/>
    <property type="project" value="UniProtKB-SubCell"/>
</dbReference>
<dbReference type="GO" id="GO:0042742">
    <property type="term" value="P:defense response to bacterium"/>
    <property type="evidence" value="ECO:0007669"/>
    <property type="project" value="UniProtKB-KW"/>
</dbReference>
<dbReference type="InterPro" id="IPR001855">
    <property type="entry name" value="Defensin_beta-like"/>
</dbReference>
<dbReference type="Pfam" id="PF00711">
    <property type="entry name" value="Defensin_beta"/>
    <property type="match status" value="1"/>
</dbReference>
<dbReference type="SUPFAM" id="SSF57392">
    <property type="entry name" value="Defensin-like"/>
    <property type="match status" value="1"/>
</dbReference>
<organism>
    <name type="scientific">Mus musculus</name>
    <name type="common">Mouse</name>
    <dbReference type="NCBI Taxonomy" id="10090"/>
    <lineage>
        <taxon>Eukaryota</taxon>
        <taxon>Metazoa</taxon>
        <taxon>Chordata</taxon>
        <taxon>Craniata</taxon>
        <taxon>Vertebrata</taxon>
        <taxon>Euteleostomi</taxon>
        <taxon>Mammalia</taxon>
        <taxon>Eutheria</taxon>
        <taxon>Euarchontoglires</taxon>
        <taxon>Glires</taxon>
        <taxon>Rodentia</taxon>
        <taxon>Myomorpha</taxon>
        <taxon>Muroidea</taxon>
        <taxon>Muridae</taxon>
        <taxon>Murinae</taxon>
        <taxon>Mus</taxon>
        <taxon>Mus</taxon>
    </lineage>
</organism>
<gene>
    <name type="primary">Defb13</name>
</gene>
<evidence type="ECO:0000250" key="1"/>
<evidence type="ECO:0000255" key="2"/>
<evidence type="ECO:0000269" key="3">
    <source>
    </source>
</evidence>
<evidence type="ECO:0000269" key="4">
    <source>
    </source>
</evidence>
<evidence type="ECO:0000305" key="5"/>
<feature type="signal peptide" evidence="2">
    <location>
        <begin position="1"/>
        <end position="22"/>
    </location>
</feature>
<feature type="chain" id="PRO_0000006941" description="Beta-defensin 13">
    <location>
        <begin position="23"/>
        <end position="64"/>
    </location>
</feature>
<feature type="disulfide bond" evidence="1">
    <location>
        <begin position="30"/>
        <end position="57"/>
    </location>
</feature>
<feature type="disulfide bond" evidence="1">
    <location>
        <begin position="37"/>
        <end position="51"/>
    </location>
</feature>
<feature type="disulfide bond" evidence="1">
    <location>
        <begin position="41"/>
        <end position="58"/>
    </location>
</feature>